<keyword id="KW-0007">Acetylation</keyword>
<keyword id="KW-0031">Aminopeptidase</keyword>
<keyword id="KW-0963">Cytoplasm</keyword>
<keyword id="KW-0378">Hydrolase</keyword>
<keyword id="KW-0479">Metal-binding</keyword>
<keyword id="KW-0645">Protease</keyword>
<keyword id="KW-1185">Reference proteome</keyword>
<keyword id="KW-0862">Zinc</keyword>
<keyword id="KW-0863">Zinc-finger</keyword>
<dbReference type="EC" id="3.4.11.18" evidence="1"/>
<dbReference type="EMBL" id="AF250960">
    <property type="protein sequence ID" value="AAG33974.1"/>
    <property type="molecule type" value="mRNA"/>
</dbReference>
<dbReference type="EMBL" id="AC002387">
    <property type="protein sequence ID" value="AAB82638.1"/>
    <property type="molecule type" value="Genomic_DNA"/>
</dbReference>
<dbReference type="EMBL" id="CP002685">
    <property type="protein sequence ID" value="AEC10528.1"/>
    <property type="molecule type" value="Genomic_DNA"/>
</dbReference>
<dbReference type="EMBL" id="AY099542">
    <property type="protein sequence ID" value="AAM20394.1"/>
    <property type="molecule type" value="mRNA"/>
</dbReference>
<dbReference type="EMBL" id="BT008490">
    <property type="protein sequence ID" value="AAP37849.1"/>
    <property type="molecule type" value="mRNA"/>
</dbReference>
<dbReference type="EMBL" id="AY087682">
    <property type="protein sequence ID" value="AAM65219.1"/>
    <property type="molecule type" value="mRNA"/>
</dbReference>
<dbReference type="PIR" id="B84888">
    <property type="entry name" value="B84888"/>
</dbReference>
<dbReference type="RefSeq" id="NP_182049.1">
    <property type="nucleotide sequence ID" value="NM_130087.4"/>
</dbReference>
<dbReference type="SMR" id="Q9SLN5"/>
<dbReference type="BioGRID" id="4468">
    <property type="interactions" value="1"/>
</dbReference>
<dbReference type="FunCoup" id="Q9SLN5">
    <property type="interactions" value="4270"/>
</dbReference>
<dbReference type="STRING" id="3702.Q9SLN5"/>
<dbReference type="MEROPS" id="M24.017"/>
<dbReference type="iPTMnet" id="Q9SLN5"/>
<dbReference type="PaxDb" id="3702-AT2G45240.1"/>
<dbReference type="ProteomicsDB" id="238843"/>
<dbReference type="EnsemblPlants" id="AT2G45240.1">
    <property type="protein sequence ID" value="AT2G45240.1"/>
    <property type="gene ID" value="AT2G45240"/>
</dbReference>
<dbReference type="GeneID" id="819132"/>
<dbReference type="Gramene" id="AT2G45240.1">
    <property type="protein sequence ID" value="AT2G45240.1"/>
    <property type="gene ID" value="AT2G45240"/>
</dbReference>
<dbReference type="KEGG" id="ath:AT2G45240"/>
<dbReference type="Araport" id="AT2G45240"/>
<dbReference type="TAIR" id="AT2G45240">
    <property type="gene designation" value="MAP1A"/>
</dbReference>
<dbReference type="eggNOG" id="KOG2738">
    <property type="taxonomic scope" value="Eukaryota"/>
</dbReference>
<dbReference type="HOGENOM" id="CLU_015857_2_1_1"/>
<dbReference type="InParanoid" id="Q9SLN5"/>
<dbReference type="OMA" id="FYGDHAY"/>
<dbReference type="OrthoDB" id="3209743at2759"/>
<dbReference type="PhylomeDB" id="Q9SLN5"/>
<dbReference type="CD-CODE" id="4299E36E">
    <property type="entry name" value="Nucleolus"/>
</dbReference>
<dbReference type="PRO" id="PR:Q9SLN5"/>
<dbReference type="Proteomes" id="UP000006548">
    <property type="component" value="Chromosome 2"/>
</dbReference>
<dbReference type="ExpressionAtlas" id="Q9SLN5">
    <property type="expression patterns" value="baseline and differential"/>
</dbReference>
<dbReference type="GO" id="GO:0005737">
    <property type="term" value="C:cytoplasm"/>
    <property type="evidence" value="ECO:0000314"/>
    <property type="project" value="TAIR"/>
</dbReference>
<dbReference type="GO" id="GO:0022626">
    <property type="term" value="C:cytosolic ribosome"/>
    <property type="evidence" value="ECO:0007669"/>
    <property type="project" value="UniProtKB-UniRule"/>
</dbReference>
<dbReference type="GO" id="GO:0004239">
    <property type="term" value="F:initiator methionyl aminopeptidase activity"/>
    <property type="evidence" value="ECO:0007669"/>
    <property type="project" value="UniProtKB-UniRule"/>
</dbReference>
<dbReference type="GO" id="GO:0070006">
    <property type="term" value="F:metalloaminopeptidase activity"/>
    <property type="evidence" value="ECO:0007669"/>
    <property type="project" value="UniProtKB-UniRule"/>
</dbReference>
<dbReference type="GO" id="GO:0008270">
    <property type="term" value="F:zinc ion binding"/>
    <property type="evidence" value="ECO:0007669"/>
    <property type="project" value="UniProtKB-KW"/>
</dbReference>
<dbReference type="GO" id="GO:0031365">
    <property type="term" value="P:N-terminal protein amino acid modification"/>
    <property type="evidence" value="ECO:0000304"/>
    <property type="project" value="TAIR"/>
</dbReference>
<dbReference type="GO" id="GO:0016485">
    <property type="term" value="P:protein processing"/>
    <property type="evidence" value="ECO:0000303"/>
    <property type="project" value="TAIR"/>
</dbReference>
<dbReference type="CDD" id="cd01086">
    <property type="entry name" value="MetAP1"/>
    <property type="match status" value="1"/>
</dbReference>
<dbReference type="FunFam" id="3.90.230.10:FF:000010">
    <property type="entry name" value="Methionine aminopeptidase"/>
    <property type="match status" value="1"/>
</dbReference>
<dbReference type="FunFam" id="6.10.140.2220:FF:000037">
    <property type="entry name" value="Methionine aminopeptidase"/>
    <property type="match status" value="1"/>
</dbReference>
<dbReference type="Gene3D" id="6.10.140.2220">
    <property type="match status" value="1"/>
</dbReference>
<dbReference type="Gene3D" id="3.90.230.10">
    <property type="entry name" value="Creatinase/methionine aminopeptidase superfamily"/>
    <property type="match status" value="1"/>
</dbReference>
<dbReference type="HAMAP" id="MF_01974">
    <property type="entry name" value="MetAP_1"/>
    <property type="match status" value="1"/>
</dbReference>
<dbReference type="InterPro" id="IPR036005">
    <property type="entry name" value="Creatinase/aminopeptidase-like"/>
</dbReference>
<dbReference type="InterPro" id="IPR000994">
    <property type="entry name" value="Pept_M24"/>
</dbReference>
<dbReference type="InterPro" id="IPR001714">
    <property type="entry name" value="Pept_M24_MAP"/>
</dbReference>
<dbReference type="InterPro" id="IPR002467">
    <property type="entry name" value="Pept_M24A_MAP1"/>
</dbReference>
<dbReference type="InterPro" id="IPR031615">
    <property type="entry name" value="Zfn-C6H2"/>
</dbReference>
<dbReference type="NCBIfam" id="TIGR00500">
    <property type="entry name" value="met_pdase_I"/>
    <property type="match status" value="1"/>
</dbReference>
<dbReference type="PANTHER" id="PTHR43330">
    <property type="entry name" value="METHIONINE AMINOPEPTIDASE"/>
    <property type="match status" value="1"/>
</dbReference>
<dbReference type="PANTHER" id="PTHR43330:SF7">
    <property type="entry name" value="METHIONINE AMINOPEPTIDASE 1"/>
    <property type="match status" value="1"/>
</dbReference>
<dbReference type="Pfam" id="PF00557">
    <property type="entry name" value="Peptidase_M24"/>
    <property type="match status" value="1"/>
</dbReference>
<dbReference type="Pfam" id="PF15801">
    <property type="entry name" value="zf-C6H2"/>
    <property type="match status" value="1"/>
</dbReference>
<dbReference type="PRINTS" id="PR00599">
    <property type="entry name" value="MAPEPTIDASE"/>
</dbReference>
<dbReference type="SUPFAM" id="SSF55920">
    <property type="entry name" value="Creatinase/aminopeptidase"/>
    <property type="match status" value="1"/>
</dbReference>
<dbReference type="PROSITE" id="PS00680">
    <property type="entry name" value="MAP_1"/>
    <property type="match status" value="1"/>
</dbReference>
<dbReference type="PROSITE" id="PS52013">
    <property type="entry name" value="ZF_C6H2"/>
    <property type="match status" value="1"/>
</dbReference>
<name>MAP1A_ARATH</name>
<accession>Q9SLN5</accession>
<accession>Q548T6</accession>
<accession>Q8LAQ1</accession>
<proteinExistence type="evidence at protein level"/>
<gene>
    <name type="primary">MAP1A</name>
    <name type="ordered locus">At2g45240</name>
    <name type="ORF">F4L23.25</name>
</gene>
<comment type="function">
    <text evidence="1">Cotranslationally removes the N-terminal methionine from nascent proteins. The N-terminal methionine is often cleaved when the second residue in the primary sequence is small and uncharged (Met-Ala-, Cys, Gly, Pro, Ser, Thr, or Val).</text>
</comment>
<comment type="catalytic activity">
    <reaction evidence="1">
        <text>Release of N-terminal amino acids, preferentially methionine, from peptides and arylamides.</text>
        <dbReference type="EC" id="3.4.11.18"/>
    </reaction>
</comment>
<comment type="cofactor">
    <cofactor evidence="1">
        <name>Zn(2+)</name>
        <dbReference type="ChEBI" id="CHEBI:29105"/>
    </cofactor>
    <cofactor evidence="1">
        <name>Co(2+)</name>
        <dbReference type="ChEBI" id="CHEBI:48828"/>
    </cofactor>
    <cofactor evidence="1">
        <name>Mn(2+)</name>
        <dbReference type="ChEBI" id="CHEBI:29035"/>
    </cofactor>
    <cofactor evidence="1">
        <name>Fe(2+)</name>
        <dbReference type="ChEBI" id="CHEBI:29033"/>
    </cofactor>
    <text evidence="1">Binds 2 divalent metal cations per subunit. Has a high-affinity and a low affinity metal-binding site. The true nature of the physiological cofactor is under debate. The enzyme is active with zinc, cobalt, manganese or divalent iron ions. Has high activity with zinc; zinc cofactor is transferred into the active site region by the ZNG1 zinc chaperone.</text>
</comment>
<comment type="subunit">
    <text evidence="1">Associates with the 60S ribosomal subunit of the 80S translational complex.</text>
</comment>
<comment type="subcellular location">
    <subcellularLocation>
        <location evidence="1 3">Cytoplasm</location>
    </subcellularLocation>
</comment>
<comment type="tissue specificity">
    <text evidence="3">Ubiquitous.</text>
</comment>
<comment type="similarity">
    <text evidence="1">Belongs to the peptidase M24A family. Methionine aminopeptidase type 1 subfamily.</text>
</comment>
<sequence>MASESDASSIATLSCARCEKPAHLQCPKCIDLKLPREQASFCTQECFKAAWSSHKSVHVKAQLSSIGDQNSDLISQGWLYCVKKGQARTPKLPHFDWTGPLKQYPISTKRVVPAEIEKPDWAIDGTPKVEPNSDLQHVVEIKTPEQIQRMRETCKIAREVLDAAARVIHPGVTTDEIDRVVHEATIAAGGYPSPLNYYFFPKSCCTSVNEVICHGIPDARKLEDGDIVNVDVTVCYKGCHGDLNETYFVGNVDEASRQLVKCTYECLEKAIAIVKPGVRFREIGEIVNRHATMSGLSVVRSYCGHGIGDLFHCAPNIPHYARNKAVGVMKAGQTFTIEPMINAGGWRDRTWPDGWTAVTADGKRSAQFEHTLLVTETGVEVLTARLPSSPDVYPWLTK</sequence>
<evidence type="ECO:0000255" key="1">
    <source>
        <dbReference type="HAMAP-Rule" id="MF_03174"/>
    </source>
</evidence>
<evidence type="ECO:0000255" key="2">
    <source>
        <dbReference type="PROSITE-ProRule" id="PRU01357"/>
    </source>
</evidence>
<evidence type="ECO:0000269" key="3">
    <source>
    </source>
</evidence>
<evidence type="ECO:0000305" key="4"/>
<evidence type="ECO:0007744" key="5">
    <source>
    </source>
</evidence>
<organism>
    <name type="scientific">Arabidopsis thaliana</name>
    <name type="common">Mouse-ear cress</name>
    <dbReference type="NCBI Taxonomy" id="3702"/>
    <lineage>
        <taxon>Eukaryota</taxon>
        <taxon>Viridiplantae</taxon>
        <taxon>Streptophyta</taxon>
        <taxon>Embryophyta</taxon>
        <taxon>Tracheophyta</taxon>
        <taxon>Spermatophyta</taxon>
        <taxon>Magnoliopsida</taxon>
        <taxon>eudicotyledons</taxon>
        <taxon>Gunneridae</taxon>
        <taxon>Pentapetalae</taxon>
        <taxon>rosids</taxon>
        <taxon>malvids</taxon>
        <taxon>Brassicales</taxon>
        <taxon>Brassicaceae</taxon>
        <taxon>Camelineae</taxon>
        <taxon>Arabidopsis</taxon>
    </lineage>
</organism>
<feature type="initiator methionine" description="Removed" evidence="5">
    <location>
        <position position="1"/>
    </location>
</feature>
<feature type="chain" id="PRO_0000148969" description="Methionine aminopeptidase 1A">
    <location>
        <begin position="2"/>
        <end position="398"/>
    </location>
</feature>
<feature type="zinc finger region" description="C6H2-type" evidence="2">
    <location>
        <begin position="12"/>
        <end position="65"/>
    </location>
</feature>
<feature type="binding site" evidence="1">
    <location>
        <position position="15"/>
    </location>
    <ligand>
        <name>Zn(2+)</name>
        <dbReference type="ChEBI" id="CHEBI:29105"/>
        <label>1</label>
    </ligand>
</feature>
<feature type="binding site" evidence="1">
    <location>
        <position position="18"/>
    </location>
    <ligand>
        <name>Zn(2+)</name>
        <dbReference type="ChEBI" id="CHEBI:29105"/>
        <label>1</label>
    </ligand>
</feature>
<feature type="binding site" evidence="1">
    <location>
        <position position="26"/>
    </location>
    <ligand>
        <name>Zn(2+)</name>
        <dbReference type="ChEBI" id="CHEBI:29105"/>
        <label>2</label>
    </ligand>
</feature>
<feature type="binding site" evidence="1">
    <location>
        <position position="29"/>
    </location>
    <ligand>
        <name>Zn(2+)</name>
        <dbReference type="ChEBI" id="CHEBI:29105"/>
        <label>2</label>
    </ligand>
</feature>
<feature type="binding site" evidence="1">
    <location>
        <position position="42"/>
    </location>
    <ligand>
        <name>Zn(2+)</name>
        <dbReference type="ChEBI" id="CHEBI:29105"/>
        <label>1</label>
    </ligand>
</feature>
<feature type="binding site" evidence="1">
    <location>
        <position position="46"/>
    </location>
    <ligand>
        <name>Zn(2+)</name>
        <dbReference type="ChEBI" id="CHEBI:29105"/>
        <label>1</label>
    </ligand>
</feature>
<feature type="binding site" evidence="1">
    <location>
        <position position="54"/>
    </location>
    <ligand>
        <name>Zn(2+)</name>
        <dbReference type="ChEBI" id="CHEBI:29105"/>
        <label>2</label>
    </ligand>
</feature>
<feature type="binding site" evidence="1">
    <location>
        <position position="58"/>
    </location>
    <ligand>
        <name>Zn(2+)</name>
        <dbReference type="ChEBI" id="CHEBI:29105"/>
        <label>2</label>
    </ligand>
</feature>
<feature type="binding site" evidence="1">
    <location>
        <position position="214"/>
    </location>
    <ligand>
        <name>a protein</name>
        <dbReference type="ChEBI" id="CHEBI:16541"/>
    </ligand>
    <ligandPart>
        <name>N-terminal L-methionine residue</name>
        <dbReference type="ChEBI" id="CHEBI:64731"/>
    </ligandPart>
</feature>
<feature type="binding site" evidence="1">
    <location>
        <position position="231"/>
    </location>
    <ligand>
        <name>Zn(2+)</name>
        <dbReference type="ChEBI" id="CHEBI:29105"/>
        <label>3</label>
    </ligand>
</feature>
<feature type="binding site" evidence="1">
    <location>
        <position position="242"/>
    </location>
    <ligand>
        <name>Zn(2+)</name>
        <dbReference type="ChEBI" id="CHEBI:29105"/>
        <label>3</label>
    </ligand>
</feature>
<feature type="binding site" evidence="1">
    <location>
        <position position="242"/>
    </location>
    <ligand>
        <name>Zn(2+)</name>
        <dbReference type="ChEBI" id="CHEBI:29105"/>
        <label>4</label>
        <note>catalytic</note>
    </ligand>
</feature>
<feature type="binding site" evidence="1">
    <location>
        <position position="305"/>
    </location>
    <ligand>
        <name>Zn(2+)</name>
        <dbReference type="ChEBI" id="CHEBI:29105"/>
        <label>4</label>
        <note>catalytic</note>
    </ligand>
</feature>
<feature type="binding site" evidence="1">
    <location>
        <position position="312"/>
    </location>
    <ligand>
        <name>a protein</name>
        <dbReference type="ChEBI" id="CHEBI:16541"/>
    </ligand>
    <ligandPart>
        <name>N-terminal L-methionine residue</name>
        <dbReference type="ChEBI" id="CHEBI:64731"/>
    </ligandPart>
</feature>
<feature type="binding site" evidence="1">
    <location>
        <position position="338"/>
    </location>
    <ligand>
        <name>Zn(2+)</name>
        <dbReference type="ChEBI" id="CHEBI:29105"/>
        <label>4</label>
        <note>catalytic</note>
    </ligand>
</feature>
<feature type="binding site" evidence="1">
    <location>
        <position position="369"/>
    </location>
    <ligand>
        <name>Zn(2+)</name>
        <dbReference type="ChEBI" id="CHEBI:29105"/>
        <label>3</label>
    </ligand>
</feature>
<feature type="binding site" evidence="1">
    <location>
        <position position="369"/>
    </location>
    <ligand>
        <name>Zn(2+)</name>
        <dbReference type="ChEBI" id="CHEBI:29105"/>
        <label>4</label>
        <note>catalytic</note>
    </ligand>
</feature>
<feature type="modified residue" description="N-acetylalanine" evidence="5">
    <location>
        <position position="2"/>
    </location>
</feature>
<feature type="sequence conflict" description="In Ref. 5; AAM65219." evidence="4" ref="5">
    <original>D</original>
    <variation>H</variation>
    <location>
        <position position="31"/>
    </location>
</feature>
<reference key="1">
    <citation type="journal article" date="2000" name="EMBO J.">
        <title>Identification of eukaryotic peptide deformylases reveals universality of N-terminal protein processing mechanisms.</title>
        <authorList>
            <person name="Giglione C."/>
            <person name="Serero A."/>
            <person name="Pierre M."/>
            <person name="Boisson B."/>
            <person name="Meinnel T."/>
        </authorList>
    </citation>
    <scope>NUCLEOTIDE SEQUENCE [MRNA]</scope>
    <scope>TISSUE SPECIFICITY</scope>
    <scope>SUBCELLULAR LOCATION</scope>
</reference>
<reference key="2">
    <citation type="journal article" date="1999" name="Nature">
        <title>Sequence and analysis of chromosome 2 of the plant Arabidopsis thaliana.</title>
        <authorList>
            <person name="Lin X."/>
            <person name="Kaul S."/>
            <person name="Rounsley S.D."/>
            <person name="Shea T.P."/>
            <person name="Benito M.-I."/>
            <person name="Town C.D."/>
            <person name="Fujii C.Y."/>
            <person name="Mason T.M."/>
            <person name="Bowman C.L."/>
            <person name="Barnstead M.E."/>
            <person name="Feldblyum T.V."/>
            <person name="Buell C.R."/>
            <person name="Ketchum K.A."/>
            <person name="Lee J.J."/>
            <person name="Ronning C.M."/>
            <person name="Koo H.L."/>
            <person name="Moffat K.S."/>
            <person name="Cronin L.A."/>
            <person name="Shen M."/>
            <person name="Pai G."/>
            <person name="Van Aken S."/>
            <person name="Umayam L."/>
            <person name="Tallon L.J."/>
            <person name="Gill J.E."/>
            <person name="Adams M.D."/>
            <person name="Carrera A.J."/>
            <person name="Creasy T.H."/>
            <person name="Goodman H.M."/>
            <person name="Somerville C.R."/>
            <person name="Copenhaver G.P."/>
            <person name="Preuss D."/>
            <person name="Nierman W.C."/>
            <person name="White O."/>
            <person name="Eisen J.A."/>
            <person name="Salzberg S.L."/>
            <person name="Fraser C.M."/>
            <person name="Venter J.C."/>
        </authorList>
    </citation>
    <scope>NUCLEOTIDE SEQUENCE [LARGE SCALE GENOMIC DNA]</scope>
    <source>
        <strain>cv. Columbia</strain>
    </source>
</reference>
<reference key="3">
    <citation type="journal article" date="2017" name="Plant J.">
        <title>Araport11: a complete reannotation of the Arabidopsis thaliana reference genome.</title>
        <authorList>
            <person name="Cheng C.Y."/>
            <person name="Krishnakumar V."/>
            <person name="Chan A.P."/>
            <person name="Thibaud-Nissen F."/>
            <person name="Schobel S."/>
            <person name="Town C.D."/>
        </authorList>
    </citation>
    <scope>GENOME REANNOTATION</scope>
    <source>
        <strain>cv. Columbia</strain>
    </source>
</reference>
<reference key="4">
    <citation type="journal article" date="2003" name="Science">
        <title>Empirical analysis of transcriptional activity in the Arabidopsis genome.</title>
        <authorList>
            <person name="Yamada K."/>
            <person name="Lim J."/>
            <person name="Dale J.M."/>
            <person name="Chen H."/>
            <person name="Shinn P."/>
            <person name="Palm C.J."/>
            <person name="Southwick A.M."/>
            <person name="Wu H.C."/>
            <person name="Kim C.J."/>
            <person name="Nguyen M."/>
            <person name="Pham P.K."/>
            <person name="Cheuk R.F."/>
            <person name="Karlin-Newmann G."/>
            <person name="Liu S.X."/>
            <person name="Lam B."/>
            <person name="Sakano H."/>
            <person name="Wu T."/>
            <person name="Yu G."/>
            <person name="Miranda M."/>
            <person name="Quach H.L."/>
            <person name="Tripp M."/>
            <person name="Chang C.H."/>
            <person name="Lee J.M."/>
            <person name="Toriumi M.J."/>
            <person name="Chan M.M."/>
            <person name="Tang C.C."/>
            <person name="Onodera C.S."/>
            <person name="Deng J.M."/>
            <person name="Akiyama K."/>
            <person name="Ansari Y."/>
            <person name="Arakawa T."/>
            <person name="Banh J."/>
            <person name="Banno F."/>
            <person name="Bowser L."/>
            <person name="Brooks S.Y."/>
            <person name="Carninci P."/>
            <person name="Chao Q."/>
            <person name="Choy N."/>
            <person name="Enju A."/>
            <person name="Goldsmith A.D."/>
            <person name="Gurjal M."/>
            <person name="Hansen N.F."/>
            <person name="Hayashizaki Y."/>
            <person name="Johnson-Hopson C."/>
            <person name="Hsuan V.W."/>
            <person name="Iida K."/>
            <person name="Karnes M."/>
            <person name="Khan S."/>
            <person name="Koesema E."/>
            <person name="Ishida J."/>
            <person name="Jiang P.X."/>
            <person name="Jones T."/>
            <person name="Kawai J."/>
            <person name="Kamiya A."/>
            <person name="Meyers C."/>
            <person name="Nakajima M."/>
            <person name="Narusaka M."/>
            <person name="Seki M."/>
            <person name="Sakurai T."/>
            <person name="Satou M."/>
            <person name="Tamse R."/>
            <person name="Vaysberg M."/>
            <person name="Wallender E.K."/>
            <person name="Wong C."/>
            <person name="Yamamura Y."/>
            <person name="Yuan S."/>
            <person name="Shinozaki K."/>
            <person name="Davis R.W."/>
            <person name="Theologis A."/>
            <person name="Ecker J.R."/>
        </authorList>
    </citation>
    <scope>NUCLEOTIDE SEQUENCE [LARGE SCALE MRNA]</scope>
    <source>
        <strain>cv. Columbia</strain>
    </source>
</reference>
<reference key="5">
    <citation type="submission" date="2002-03" db="EMBL/GenBank/DDBJ databases">
        <title>Full-length cDNA from Arabidopsis thaliana.</title>
        <authorList>
            <person name="Brover V.V."/>
            <person name="Troukhan M.E."/>
            <person name="Alexandrov N.A."/>
            <person name="Lu Y.-P."/>
            <person name="Flavell R.B."/>
            <person name="Feldmann K.A."/>
        </authorList>
    </citation>
    <scope>NUCLEOTIDE SEQUENCE [LARGE SCALE MRNA]</scope>
</reference>
<reference key="6">
    <citation type="journal article" date="2012" name="Mol. Cell. Proteomics">
        <title>Comparative large-scale characterisation of plant vs. mammal proteins reveals similar and idiosyncratic N-alpha acetylation features.</title>
        <authorList>
            <person name="Bienvenut W.V."/>
            <person name="Sumpton D."/>
            <person name="Martinez A."/>
            <person name="Lilla S."/>
            <person name="Espagne C."/>
            <person name="Meinnel T."/>
            <person name="Giglione C."/>
        </authorList>
    </citation>
    <scope>ACETYLATION [LARGE SCALE ANALYSIS] AT ALA-2</scope>
    <scope>CLEAVAGE OF INITIATOR METHIONINE [LARGE SCALE ANALYSIS]</scope>
    <scope>IDENTIFICATION BY MASS SPECTROMETRY [LARGE SCALE ANALYSIS]</scope>
</reference>
<protein>
    <recommendedName>
        <fullName evidence="1">Methionine aminopeptidase 1A</fullName>
        <shortName evidence="1">MAP 1A</shortName>
        <shortName evidence="1">MetAP 1A</shortName>
        <ecNumber evidence="1">3.4.11.18</ecNumber>
    </recommendedName>
    <alternativeName>
        <fullName evidence="1">Peptidase M 1A</fullName>
    </alternativeName>
</protein>